<dbReference type="EC" id="1.3.1.98" evidence="1"/>
<dbReference type="EMBL" id="AP008229">
    <property type="protein sequence ID" value="BAE68856.1"/>
    <property type="molecule type" value="Genomic_DNA"/>
</dbReference>
<dbReference type="RefSeq" id="WP_011408479.1">
    <property type="nucleotide sequence ID" value="NC_007705.1"/>
</dbReference>
<dbReference type="SMR" id="Q2P3M1"/>
<dbReference type="KEGG" id="xom:XOO2101"/>
<dbReference type="HOGENOM" id="CLU_035304_0_0_6"/>
<dbReference type="UniPathway" id="UPA00219"/>
<dbReference type="GO" id="GO:0005829">
    <property type="term" value="C:cytosol"/>
    <property type="evidence" value="ECO:0007669"/>
    <property type="project" value="TreeGrafter"/>
</dbReference>
<dbReference type="GO" id="GO:0071949">
    <property type="term" value="F:FAD binding"/>
    <property type="evidence" value="ECO:0007669"/>
    <property type="project" value="InterPro"/>
</dbReference>
<dbReference type="GO" id="GO:0008762">
    <property type="term" value="F:UDP-N-acetylmuramate dehydrogenase activity"/>
    <property type="evidence" value="ECO:0007669"/>
    <property type="project" value="UniProtKB-UniRule"/>
</dbReference>
<dbReference type="GO" id="GO:0051301">
    <property type="term" value="P:cell division"/>
    <property type="evidence" value="ECO:0007669"/>
    <property type="project" value="UniProtKB-KW"/>
</dbReference>
<dbReference type="GO" id="GO:0071555">
    <property type="term" value="P:cell wall organization"/>
    <property type="evidence" value="ECO:0007669"/>
    <property type="project" value="UniProtKB-KW"/>
</dbReference>
<dbReference type="GO" id="GO:0009252">
    <property type="term" value="P:peptidoglycan biosynthetic process"/>
    <property type="evidence" value="ECO:0007669"/>
    <property type="project" value="UniProtKB-UniRule"/>
</dbReference>
<dbReference type="GO" id="GO:0008360">
    <property type="term" value="P:regulation of cell shape"/>
    <property type="evidence" value="ECO:0007669"/>
    <property type="project" value="UniProtKB-KW"/>
</dbReference>
<dbReference type="Gene3D" id="3.30.465.10">
    <property type="match status" value="1"/>
</dbReference>
<dbReference type="Gene3D" id="3.90.78.10">
    <property type="entry name" value="UDP-N-acetylenolpyruvoylglucosamine reductase, C-terminal domain"/>
    <property type="match status" value="1"/>
</dbReference>
<dbReference type="Gene3D" id="3.30.43.10">
    <property type="entry name" value="Uridine Diphospho-n-acetylenolpyruvylglucosamine Reductase, domain 2"/>
    <property type="match status" value="1"/>
</dbReference>
<dbReference type="HAMAP" id="MF_00037">
    <property type="entry name" value="MurB"/>
    <property type="match status" value="1"/>
</dbReference>
<dbReference type="InterPro" id="IPR016166">
    <property type="entry name" value="FAD-bd_PCMH"/>
</dbReference>
<dbReference type="InterPro" id="IPR036318">
    <property type="entry name" value="FAD-bd_PCMH-like_sf"/>
</dbReference>
<dbReference type="InterPro" id="IPR016167">
    <property type="entry name" value="FAD-bd_PCMH_sub1"/>
</dbReference>
<dbReference type="InterPro" id="IPR016169">
    <property type="entry name" value="FAD-bd_PCMH_sub2"/>
</dbReference>
<dbReference type="InterPro" id="IPR003170">
    <property type="entry name" value="MurB"/>
</dbReference>
<dbReference type="InterPro" id="IPR011601">
    <property type="entry name" value="MurB_C"/>
</dbReference>
<dbReference type="InterPro" id="IPR036635">
    <property type="entry name" value="MurB_C_sf"/>
</dbReference>
<dbReference type="InterPro" id="IPR006094">
    <property type="entry name" value="Oxid_FAD_bind_N"/>
</dbReference>
<dbReference type="NCBIfam" id="TIGR00179">
    <property type="entry name" value="murB"/>
    <property type="match status" value="1"/>
</dbReference>
<dbReference type="NCBIfam" id="NF000755">
    <property type="entry name" value="PRK00046.1"/>
    <property type="match status" value="1"/>
</dbReference>
<dbReference type="NCBIfam" id="NF010478">
    <property type="entry name" value="PRK13903.1"/>
    <property type="match status" value="1"/>
</dbReference>
<dbReference type="PANTHER" id="PTHR21071">
    <property type="entry name" value="UDP-N-ACETYLENOLPYRUVOYLGLUCOSAMINE REDUCTASE"/>
    <property type="match status" value="1"/>
</dbReference>
<dbReference type="PANTHER" id="PTHR21071:SF4">
    <property type="entry name" value="UDP-N-ACETYLENOLPYRUVOYLGLUCOSAMINE REDUCTASE"/>
    <property type="match status" value="1"/>
</dbReference>
<dbReference type="Pfam" id="PF01565">
    <property type="entry name" value="FAD_binding_4"/>
    <property type="match status" value="1"/>
</dbReference>
<dbReference type="Pfam" id="PF02873">
    <property type="entry name" value="MurB_C"/>
    <property type="match status" value="1"/>
</dbReference>
<dbReference type="SUPFAM" id="SSF56176">
    <property type="entry name" value="FAD-binding/transporter-associated domain-like"/>
    <property type="match status" value="1"/>
</dbReference>
<dbReference type="SUPFAM" id="SSF56194">
    <property type="entry name" value="Uridine diphospho-N-Acetylenolpyruvylglucosamine reductase, MurB, C-terminal domain"/>
    <property type="match status" value="1"/>
</dbReference>
<dbReference type="PROSITE" id="PS51387">
    <property type="entry name" value="FAD_PCMH"/>
    <property type="match status" value="1"/>
</dbReference>
<protein>
    <recommendedName>
        <fullName evidence="1">UDP-N-acetylenolpyruvoylglucosamine reductase</fullName>
        <ecNumber evidence="1">1.3.1.98</ecNumber>
    </recommendedName>
    <alternativeName>
        <fullName evidence="1">UDP-N-acetylmuramate dehydrogenase</fullName>
    </alternativeName>
</protein>
<reference key="1">
    <citation type="journal article" date="2005" name="Jpn. Agric. Res. Q.">
        <title>Genome sequence of Xanthomonas oryzae pv. oryzae suggests contribution of large numbers of effector genes and insertion sequences to its race diversity.</title>
        <authorList>
            <person name="Ochiai H."/>
            <person name="Inoue Y."/>
            <person name="Takeya M."/>
            <person name="Sasaki A."/>
            <person name="Kaku H."/>
        </authorList>
    </citation>
    <scope>NUCLEOTIDE SEQUENCE [LARGE SCALE GENOMIC DNA]</scope>
    <source>
        <strain>MAFF 311018</strain>
    </source>
</reference>
<organism>
    <name type="scientific">Xanthomonas oryzae pv. oryzae (strain MAFF 311018)</name>
    <dbReference type="NCBI Taxonomy" id="342109"/>
    <lineage>
        <taxon>Bacteria</taxon>
        <taxon>Pseudomonadati</taxon>
        <taxon>Pseudomonadota</taxon>
        <taxon>Gammaproteobacteria</taxon>
        <taxon>Lysobacterales</taxon>
        <taxon>Lysobacteraceae</taxon>
        <taxon>Xanthomonas</taxon>
    </lineage>
</organism>
<proteinExistence type="inferred from homology"/>
<comment type="function">
    <text evidence="1">Cell wall formation.</text>
</comment>
<comment type="catalytic activity">
    <reaction evidence="1">
        <text>UDP-N-acetyl-alpha-D-muramate + NADP(+) = UDP-N-acetyl-3-O-(1-carboxyvinyl)-alpha-D-glucosamine + NADPH + H(+)</text>
        <dbReference type="Rhea" id="RHEA:12248"/>
        <dbReference type="ChEBI" id="CHEBI:15378"/>
        <dbReference type="ChEBI" id="CHEBI:57783"/>
        <dbReference type="ChEBI" id="CHEBI:58349"/>
        <dbReference type="ChEBI" id="CHEBI:68483"/>
        <dbReference type="ChEBI" id="CHEBI:70757"/>
        <dbReference type="EC" id="1.3.1.98"/>
    </reaction>
</comment>
<comment type="cofactor">
    <cofactor evidence="1">
        <name>FAD</name>
        <dbReference type="ChEBI" id="CHEBI:57692"/>
    </cofactor>
</comment>
<comment type="pathway">
    <text evidence="1">Cell wall biogenesis; peptidoglycan biosynthesis.</text>
</comment>
<comment type="subcellular location">
    <subcellularLocation>
        <location evidence="1">Cytoplasm</location>
    </subcellularLocation>
</comment>
<comment type="similarity">
    <text evidence="1">Belongs to the MurB family.</text>
</comment>
<keyword id="KW-0131">Cell cycle</keyword>
<keyword id="KW-0132">Cell division</keyword>
<keyword id="KW-0133">Cell shape</keyword>
<keyword id="KW-0961">Cell wall biogenesis/degradation</keyword>
<keyword id="KW-0963">Cytoplasm</keyword>
<keyword id="KW-0274">FAD</keyword>
<keyword id="KW-0285">Flavoprotein</keyword>
<keyword id="KW-0521">NADP</keyword>
<keyword id="KW-0560">Oxidoreductase</keyword>
<keyword id="KW-0573">Peptidoglycan synthesis</keyword>
<name>MURB_XANOM</name>
<gene>
    <name evidence="1" type="primary">murB</name>
    <name type="ordered locus">XOO2101</name>
</gene>
<accession>Q2P3M1</accession>
<evidence type="ECO:0000255" key="1">
    <source>
        <dbReference type="HAMAP-Rule" id="MF_00037"/>
    </source>
</evidence>
<feature type="chain" id="PRO_1000002925" description="UDP-N-acetylenolpyruvoylglucosamine reductase">
    <location>
        <begin position="1"/>
        <end position="350"/>
    </location>
</feature>
<feature type="domain" description="FAD-binding PCMH-type" evidence="1">
    <location>
        <begin position="24"/>
        <end position="195"/>
    </location>
</feature>
<feature type="active site" evidence="1">
    <location>
        <position position="172"/>
    </location>
</feature>
<feature type="active site" description="Proton donor" evidence="1">
    <location>
        <position position="245"/>
    </location>
</feature>
<feature type="active site" evidence="1">
    <location>
        <position position="342"/>
    </location>
</feature>
<sequence>MSDTTQVGWQLSEHAPLRALNTFHVEATARWLLSVHTPEALPQALAAPEIADQPLLVLGSGSNVLLAGDPPGCVLCFENRDTAIIAHHADHAIVRAGAGVNWHALVLYSLQQGLSGLENLALIPGTVGACPIQNIGAYGAQVGDFIHVVEAFDRHHQQFVRLDAAACALGYRDSVFKQQPERYLIVAVEFNLPLLCELRLDYAGIREELASMGAELARAADVAQAVINIRQRKLPDPDVLGNAGSFFKNPLLPNEQIAALQASFTDMPVYPGEHAGLGKLSAAWLIEQCGWKGRREGDAGVSPEHALVLVNYGTASGAQLLDFARRIAESVRERYSVILEPEPRIIGAHW</sequence>